<name>BXE1_BOMMO</name>
<dbReference type="EMBL" id="D78138">
    <property type="protein sequence ID" value="BAA22159.1"/>
    <property type="molecule type" value="Genomic_DNA"/>
</dbReference>
<dbReference type="PIR" id="JT0410">
    <property type="entry name" value="JT0410"/>
</dbReference>
<dbReference type="PIR" id="JT0412">
    <property type="entry name" value="JT0412"/>
</dbReference>
<dbReference type="RefSeq" id="NP_001119733.1">
    <property type="nucleotide sequence ID" value="NM_001126261.1"/>
</dbReference>
<dbReference type="FunCoup" id="P21808">
    <property type="interactions" value="162"/>
</dbReference>
<dbReference type="PaxDb" id="7091-BGIBMGA012294-TA"/>
<dbReference type="EnsemblMetazoa" id="NM_001126261.1">
    <property type="protein sequence ID" value="NP_001119733.1"/>
    <property type="gene ID" value="GeneID_100146109"/>
</dbReference>
<dbReference type="GeneID" id="100146109"/>
<dbReference type="KEGG" id="bmor:100146109"/>
<dbReference type="CTD" id="100146109"/>
<dbReference type="eggNOG" id="ENOG502SESX">
    <property type="taxonomic scope" value="Eukaryota"/>
</dbReference>
<dbReference type="HOGENOM" id="CLU_125164_2_0_1"/>
<dbReference type="InParanoid" id="P21808"/>
<dbReference type="OrthoDB" id="493443at7088"/>
<dbReference type="Proteomes" id="UP000005204">
    <property type="component" value="Unassembled WGS sequence"/>
</dbReference>
<dbReference type="GO" id="GO:0005615">
    <property type="term" value="C:extracellular space"/>
    <property type="evidence" value="ECO:0007669"/>
    <property type="project" value="InterPro"/>
</dbReference>
<dbReference type="GO" id="GO:0008083">
    <property type="term" value="F:growth factor activity"/>
    <property type="evidence" value="ECO:0007669"/>
    <property type="project" value="InterPro"/>
</dbReference>
<dbReference type="GO" id="GO:0005179">
    <property type="term" value="F:hormone activity"/>
    <property type="evidence" value="ECO:0007669"/>
    <property type="project" value="UniProtKB-KW"/>
</dbReference>
<dbReference type="CDD" id="cd04366">
    <property type="entry name" value="IlGF_insulin_bombyxin_like"/>
    <property type="match status" value="1"/>
</dbReference>
<dbReference type="Gene3D" id="1.10.100.10">
    <property type="entry name" value="Insulin-like"/>
    <property type="match status" value="1"/>
</dbReference>
<dbReference type="InterPro" id="IPR017097">
    <property type="entry name" value="Bombyxin"/>
</dbReference>
<dbReference type="InterPro" id="IPR016179">
    <property type="entry name" value="Insulin-like"/>
</dbReference>
<dbReference type="InterPro" id="IPR036438">
    <property type="entry name" value="Insulin-like_sf"/>
</dbReference>
<dbReference type="InterPro" id="IPR022353">
    <property type="entry name" value="Insulin_CS"/>
</dbReference>
<dbReference type="InterPro" id="IPR022352">
    <property type="entry name" value="Insulin_family"/>
</dbReference>
<dbReference type="PANTHER" id="PTHR13647:SF4">
    <property type="entry name" value="INSULIN-LIKE PEPTIDE 1-RELATED"/>
    <property type="match status" value="1"/>
</dbReference>
<dbReference type="PANTHER" id="PTHR13647">
    <property type="entry name" value="INSULIN-LIKE PEPTIDE 2-RELATED"/>
    <property type="match status" value="1"/>
</dbReference>
<dbReference type="Pfam" id="PF00049">
    <property type="entry name" value="Insulin"/>
    <property type="match status" value="1"/>
</dbReference>
<dbReference type="PIRSF" id="PIRSF037038">
    <property type="entry name" value="Bombyxin"/>
    <property type="match status" value="1"/>
</dbReference>
<dbReference type="PRINTS" id="PR00276">
    <property type="entry name" value="INSULINFAMLY"/>
</dbReference>
<dbReference type="SMART" id="SM00078">
    <property type="entry name" value="IlGF"/>
    <property type="match status" value="1"/>
</dbReference>
<dbReference type="SUPFAM" id="SSF56994">
    <property type="entry name" value="Insulin-like"/>
    <property type="match status" value="1"/>
</dbReference>
<dbReference type="PROSITE" id="PS00262">
    <property type="entry name" value="INSULIN"/>
    <property type="match status" value="1"/>
</dbReference>
<gene>
    <name type="primary">BBXE1</name>
</gene>
<organism>
    <name type="scientific">Bombyx mori</name>
    <name type="common">Silk moth</name>
    <dbReference type="NCBI Taxonomy" id="7091"/>
    <lineage>
        <taxon>Eukaryota</taxon>
        <taxon>Metazoa</taxon>
        <taxon>Ecdysozoa</taxon>
        <taxon>Arthropoda</taxon>
        <taxon>Hexapoda</taxon>
        <taxon>Insecta</taxon>
        <taxon>Pterygota</taxon>
        <taxon>Neoptera</taxon>
        <taxon>Endopterygota</taxon>
        <taxon>Lepidoptera</taxon>
        <taxon>Glossata</taxon>
        <taxon>Ditrysia</taxon>
        <taxon>Bombycoidea</taxon>
        <taxon>Bombycidae</taxon>
        <taxon>Bombycinae</taxon>
        <taxon>Bombyx</taxon>
    </lineage>
</organism>
<comment type="function">
    <text>PTTH is a brain peptide responsible for activation of prothoracic glands to produce ecdysone in insects.</text>
</comment>
<comment type="subunit">
    <text>Heterodimer of a B chain and an A chain linked by two disulfide bonds.</text>
</comment>
<comment type="subcellular location">
    <subcellularLocation>
        <location>Secreted</location>
    </subcellularLocation>
</comment>
<comment type="miscellaneous">
    <text>Silk worm has two kinds of PTTH: 4K-PTTH and 22K-PTTH; there are four forms of 4K-PTTH.</text>
</comment>
<comment type="similarity">
    <text evidence="3">Belongs to the insulin family.</text>
</comment>
<accession>P21808</accession>
<accession>O18329</accession>
<keyword id="KW-0165">Cleavage on pair of basic residues</keyword>
<keyword id="KW-0903">Direct protein sequencing</keyword>
<keyword id="KW-1015">Disulfide bond</keyword>
<keyword id="KW-0372">Hormone</keyword>
<keyword id="KW-0873">Pyrrolidone carboxylic acid</keyword>
<keyword id="KW-1185">Reference proteome</keyword>
<keyword id="KW-0964">Secreted</keyword>
<keyword id="KW-0732">Signal</keyword>
<proteinExistence type="evidence at protein level"/>
<reference key="1">
    <citation type="journal article" date="1997" name="Comp. Biochem. Physiol.">
        <title>Structure and expression of bombyxin E1 gene: a novel family gene that encodes bombyxin-IV, an insect insulin-related neurosecretory peptide.</title>
        <authorList>
            <person name="Tsuzuki S."/>
            <person name="Masuta T."/>
            <person name="Furuno M."/>
            <person name="Sakurai S."/>
            <person name="Iwami M."/>
        </authorList>
    </citation>
    <scope>NUCLEOTIDE SEQUENCE [GENOMIC DNA]</scope>
    <source>
        <strain>Kinshu X Showa</strain>
    </source>
</reference>
<reference key="2">
    <citation type="journal article" date="1988" name="Agric. Biol. Chem.">
        <title>Isolation and primary structure of bombyxin-IV, a novel molecular species of bombyxin from the silkworm, Bombyx mori.</title>
        <authorList>
            <person name="Maruyama K."/>
            <person name="Hietter H."/>
            <person name="Nagasawa H."/>
            <person name="Isogai A."/>
            <person name="Tamura S."/>
            <person name="Suzuki A."/>
            <person name="Ishizaki H."/>
        </authorList>
    </citation>
    <scope>PROTEIN SEQUENCE OF 48-67 AND 79-98</scope>
    <scope>PYROGLUTAMATE FORMATION AT GLN-20</scope>
</reference>
<reference key="3">
    <citation type="journal article" date="1992" name="J. Protein Chem.">
        <title>Determination of disulfide bond arrangement in bombyxin-IV, an insulin superfamily peptide from the silkworm, Bombyx mori, by combination of thermolysin digestion of natural peptide and selective synthesis of disulfide bond isomers.</title>
        <authorList>
            <person name="Maruyama K."/>
            <person name="Nagasawa H."/>
            <person name="Isogai A."/>
            <person name="Ishizaki H."/>
            <person name="Suzuki A."/>
        </authorList>
    </citation>
    <scope>DISULFIDE BONDS</scope>
</reference>
<evidence type="ECO:0000269" key="1">
    <source>
    </source>
</evidence>
<evidence type="ECO:0000269" key="2">
    <source ref="2"/>
</evidence>
<evidence type="ECO:0000305" key="3"/>
<sequence length="98" mass="10987">MNRPVFLVLLLTGFLCIAAQEANVAHHYCGRHLANTLADLCWDTSVEKRSESSLASYSSRGWPWLPTPNFNKRAIKKRGVVDECCIQPCTLDVLATYC</sequence>
<protein>
    <recommendedName>
        <fullName>Bombyxin E-1</fullName>
        <shortName>BBX-E1</shortName>
    </recommendedName>
    <alternativeName>
        <fullName>4K-prothoracicotropic hormone IV</fullName>
        <shortName>4K-PTTH-IV</shortName>
    </alternativeName>
    <alternativeName>
        <fullName>Bombyxin IV</fullName>
    </alternativeName>
    <component>
        <recommendedName>
            <fullName>Bombyxin E-1 B chain</fullName>
        </recommendedName>
    </component>
    <component>
        <recommendedName>
            <fullName>Bombyxin E-1 A chain</fullName>
        </recommendedName>
    </component>
</protein>
<feature type="signal peptide">
    <location>
        <begin position="1"/>
        <end position="19"/>
    </location>
</feature>
<feature type="peptide" id="PRO_0000016034" description="Bombyxin E-1 B chain" evidence="2">
    <location>
        <begin position="20"/>
        <end position="47"/>
    </location>
</feature>
<feature type="propeptide" id="PRO_0000016035" description="C peptide like">
    <location>
        <begin position="50"/>
        <end position="75"/>
    </location>
</feature>
<feature type="peptide" id="PRO_0000016036" description="Bombyxin E-1 A chain">
    <location>
        <begin position="79"/>
        <end position="98"/>
    </location>
</feature>
<feature type="modified residue" description="Pyrrolidone carboxylic acid" evidence="2">
    <location>
        <position position="20"/>
    </location>
</feature>
<feature type="disulfide bond" description="Interchain (between B and A chains)" evidence="1">
    <location>
        <begin position="29"/>
        <end position="85"/>
    </location>
</feature>
<feature type="disulfide bond" description="Interchain (between B and A chains)" evidence="1">
    <location>
        <begin position="41"/>
        <end position="98"/>
    </location>
</feature>
<feature type="disulfide bond" evidence="1">
    <location>
        <begin position="84"/>
        <end position="89"/>
    </location>
</feature>